<protein>
    <recommendedName>
        <fullName evidence="1">Ribulose bisphosphate carboxylase large chain</fullName>
        <shortName evidence="1">RuBisCO large subunit</shortName>
        <ecNumber evidence="1">4.1.1.39</ecNumber>
    </recommendedName>
</protein>
<organism>
    <name type="scientific">Saururus cernuus</name>
    <name type="common">Lizard's tail</name>
    <dbReference type="NCBI Taxonomy" id="13260"/>
    <lineage>
        <taxon>Eukaryota</taxon>
        <taxon>Viridiplantae</taxon>
        <taxon>Streptophyta</taxon>
        <taxon>Embryophyta</taxon>
        <taxon>Tracheophyta</taxon>
        <taxon>Spermatophyta</taxon>
        <taxon>Magnoliopsida</taxon>
        <taxon>Magnoliidae</taxon>
        <taxon>Piperales</taxon>
        <taxon>Saururaceae</taxon>
        <taxon>Saururus</taxon>
    </lineage>
</organism>
<keyword id="KW-0113">Calvin cycle</keyword>
<keyword id="KW-0120">Carbon dioxide fixation</keyword>
<keyword id="KW-0150">Chloroplast</keyword>
<keyword id="KW-1015">Disulfide bond</keyword>
<keyword id="KW-0456">Lyase</keyword>
<keyword id="KW-0460">Magnesium</keyword>
<keyword id="KW-0479">Metal-binding</keyword>
<keyword id="KW-0488">Methylation</keyword>
<keyword id="KW-0503">Monooxygenase</keyword>
<keyword id="KW-0560">Oxidoreductase</keyword>
<keyword id="KW-0601">Photorespiration</keyword>
<keyword id="KW-0602">Photosynthesis</keyword>
<keyword id="KW-0934">Plastid</keyword>
<geneLocation type="chloroplast"/>
<feature type="chain" id="PRO_0000062587" description="Ribulose bisphosphate carboxylase large chain">
    <location>
        <begin position="1" status="less than"/>
        <end position="466"/>
    </location>
</feature>
<feature type="active site" description="Proton acceptor" evidence="1">
    <location>
        <position position="166"/>
    </location>
</feature>
<feature type="active site" description="Proton acceptor" evidence="1">
    <location>
        <position position="285"/>
    </location>
</feature>
<feature type="binding site" description="in homodimeric partner" evidence="1">
    <location>
        <position position="114"/>
    </location>
    <ligand>
        <name>substrate</name>
    </ligand>
</feature>
<feature type="binding site" evidence="1">
    <location>
        <position position="164"/>
    </location>
    <ligand>
        <name>substrate</name>
    </ligand>
</feature>
<feature type="binding site" evidence="1">
    <location>
        <position position="168"/>
    </location>
    <ligand>
        <name>substrate</name>
    </ligand>
</feature>
<feature type="binding site" description="via carbamate group" evidence="1">
    <location>
        <position position="192"/>
    </location>
    <ligand>
        <name>Mg(2+)</name>
        <dbReference type="ChEBI" id="CHEBI:18420"/>
    </ligand>
</feature>
<feature type="binding site" evidence="1">
    <location>
        <position position="194"/>
    </location>
    <ligand>
        <name>Mg(2+)</name>
        <dbReference type="ChEBI" id="CHEBI:18420"/>
    </ligand>
</feature>
<feature type="binding site" evidence="1">
    <location>
        <position position="195"/>
    </location>
    <ligand>
        <name>Mg(2+)</name>
        <dbReference type="ChEBI" id="CHEBI:18420"/>
    </ligand>
</feature>
<feature type="binding site" evidence="1">
    <location>
        <position position="286"/>
    </location>
    <ligand>
        <name>substrate</name>
    </ligand>
</feature>
<feature type="binding site" evidence="1">
    <location>
        <position position="318"/>
    </location>
    <ligand>
        <name>substrate</name>
    </ligand>
</feature>
<feature type="binding site" evidence="1">
    <location>
        <position position="370"/>
    </location>
    <ligand>
        <name>substrate</name>
    </ligand>
</feature>
<feature type="site" description="Transition state stabilizer" evidence="1">
    <location>
        <position position="325"/>
    </location>
</feature>
<feature type="modified residue" description="N6,N6,N6-trimethyllysine" evidence="1">
    <location>
        <position position="5"/>
    </location>
</feature>
<feature type="modified residue" description="N6-carboxylysine" evidence="1">
    <location>
        <position position="192"/>
    </location>
</feature>
<feature type="disulfide bond" description="Interchain; in linked form" evidence="1">
    <location>
        <position position="238"/>
    </location>
</feature>
<feature type="non-terminal residue">
    <location>
        <position position="1"/>
    </location>
</feature>
<reference key="1">
    <citation type="journal article" date="1993" name="Ann. Mo. Bot. Gard.">
        <title>A parsimony analysis of the Asteridae sensu lato based on rbcL sequences.</title>
        <authorList>
            <person name="Olmstead R.G."/>
            <person name="Bremer B."/>
            <person name="Scott K.M."/>
            <person name="Palmer J.D."/>
        </authorList>
        <dbReference type="AGRICOLA" id="IND93053816"/>
    </citation>
    <scope>NUCLEOTIDE SEQUENCE [GENOMIC DNA]</scope>
</reference>
<accession>P36486</accession>
<dbReference type="EC" id="4.1.1.39" evidence="1"/>
<dbReference type="EMBL" id="L14294">
    <property type="protein sequence ID" value="AAA32081.1"/>
    <property type="molecule type" value="Genomic_DNA"/>
</dbReference>
<dbReference type="SMR" id="P36486"/>
<dbReference type="GO" id="GO:0009507">
    <property type="term" value="C:chloroplast"/>
    <property type="evidence" value="ECO:0007669"/>
    <property type="project" value="UniProtKB-SubCell"/>
</dbReference>
<dbReference type="GO" id="GO:0000287">
    <property type="term" value="F:magnesium ion binding"/>
    <property type="evidence" value="ECO:0007669"/>
    <property type="project" value="InterPro"/>
</dbReference>
<dbReference type="GO" id="GO:0004497">
    <property type="term" value="F:monooxygenase activity"/>
    <property type="evidence" value="ECO:0007669"/>
    <property type="project" value="UniProtKB-KW"/>
</dbReference>
<dbReference type="GO" id="GO:0016984">
    <property type="term" value="F:ribulose-bisphosphate carboxylase activity"/>
    <property type="evidence" value="ECO:0007669"/>
    <property type="project" value="UniProtKB-EC"/>
</dbReference>
<dbReference type="GO" id="GO:0009853">
    <property type="term" value="P:photorespiration"/>
    <property type="evidence" value="ECO:0007669"/>
    <property type="project" value="UniProtKB-KW"/>
</dbReference>
<dbReference type="GO" id="GO:0019253">
    <property type="term" value="P:reductive pentose-phosphate cycle"/>
    <property type="evidence" value="ECO:0007669"/>
    <property type="project" value="UniProtKB-KW"/>
</dbReference>
<dbReference type="CDD" id="cd08212">
    <property type="entry name" value="RuBisCO_large_I"/>
    <property type="match status" value="1"/>
</dbReference>
<dbReference type="FunFam" id="3.20.20.110:FF:000001">
    <property type="entry name" value="Ribulose bisphosphate carboxylase large chain"/>
    <property type="match status" value="1"/>
</dbReference>
<dbReference type="FunFam" id="3.30.70.150:FF:000001">
    <property type="entry name" value="Ribulose bisphosphate carboxylase large chain"/>
    <property type="match status" value="1"/>
</dbReference>
<dbReference type="Gene3D" id="3.20.20.110">
    <property type="entry name" value="Ribulose bisphosphate carboxylase, large subunit, C-terminal domain"/>
    <property type="match status" value="1"/>
</dbReference>
<dbReference type="Gene3D" id="3.30.70.150">
    <property type="entry name" value="RuBisCO large subunit, N-terminal domain"/>
    <property type="match status" value="1"/>
</dbReference>
<dbReference type="HAMAP" id="MF_01338">
    <property type="entry name" value="RuBisCO_L_type1"/>
    <property type="match status" value="1"/>
</dbReference>
<dbReference type="InterPro" id="IPR033966">
    <property type="entry name" value="RuBisCO"/>
</dbReference>
<dbReference type="InterPro" id="IPR020878">
    <property type="entry name" value="RuBisCo_large_chain_AS"/>
</dbReference>
<dbReference type="InterPro" id="IPR000685">
    <property type="entry name" value="RuBisCO_lsu_C"/>
</dbReference>
<dbReference type="InterPro" id="IPR036376">
    <property type="entry name" value="RuBisCO_lsu_C_sf"/>
</dbReference>
<dbReference type="InterPro" id="IPR017443">
    <property type="entry name" value="RuBisCO_lsu_fd_N"/>
</dbReference>
<dbReference type="InterPro" id="IPR036422">
    <property type="entry name" value="RuBisCO_lsu_N_sf"/>
</dbReference>
<dbReference type="InterPro" id="IPR020888">
    <property type="entry name" value="RuBisCO_lsuI"/>
</dbReference>
<dbReference type="NCBIfam" id="NF003252">
    <property type="entry name" value="PRK04208.1"/>
    <property type="match status" value="1"/>
</dbReference>
<dbReference type="PANTHER" id="PTHR42704">
    <property type="entry name" value="RIBULOSE BISPHOSPHATE CARBOXYLASE"/>
    <property type="match status" value="1"/>
</dbReference>
<dbReference type="PANTHER" id="PTHR42704:SF16">
    <property type="entry name" value="RIBULOSE BISPHOSPHATE CARBOXYLASE LARGE CHAIN"/>
    <property type="match status" value="1"/>
</dbReference>
<dbReference type="Pfam" id="PF00016">
    <property type="entry name" value="RuBisCO_large"/>
    <property type="match status" value="1"/>
</dbReference>
<dbReference type="Pfam" id="PF02788">
    <property type="entry name" value="RuBisCO_large_N"/>
    <property type="match status" value="1"/>
</dbReference>
<dbReference type="SFLD" id="SFLDG01052">
    <property type="entry name" value="RuBisCO"/>
    <property type="match status" value="1"/>
</dbReference>
<dbReference type="SFLD" id="SFLDS00014">
    <property type="entry name" value="RuBisCO"/>
    <property type="match status" value="1"/>
</dbReference>
<dbReference type="SFLD" id="SFLDG00301">
    <property type="entry name" value="RuBisCO-like_proteins"/>
    <property type="match status" value="1"/>
</dbReference>
<dbReference type="SUPFAM" id="SSF51649">
    <property type="entry name" value="RuBisCo, C-terminal domain"/>
    <property type="match status" value="1"/>
</dbReference>
<dbReference type="SUPFAM" id="SSF54966">
    <property type="entry name" value="RuBisCO, large subunit, small (N-terminal) domain"/>
    <property type="match status" value="1"/>
</dbReference>
<dbReference type="PROSITE" id="PS00157">
    <property type="entry name" value="RUBISCO_LARGE"/>
    <property type="match status" value="1"/>
</dbReference>
<comment type="function">
    <text evidence="1">RuBisCO catalyzes two reactions: the carboxylation of D-ribulose 1,5-bisphosphate, the primary event in carbon dioxide fixation, as well as the oxidative fragmentation of the pentose substrate in the photorespiration process. Both reactions occur simultaneously and in competition at the same active site.</text>
</comment>
<comment type="catalytic activity">
    <reaction evidence="1">
        <text>2 (2R)-3-phosphoglycerate + 2 H(+) = D-ribulose 1,5-bisphosphate + CO2 + H2O</text>
        <dbReference type="Rhea" id="RHEA:23124"/>
        <dbReference type="ChEBI" id="CHEBI:15377"/>
        <dbReference type="ChEBI" id="CHEBI:15378"/>
        <dbReference type="ChEBI" id="CHEBI:16526"/>
        <dbReference type="ChEBI" id="CHEBI:57870"/>
        <dbReference type="ChEBI" id="CHEBI:58272"/>
        <dbReference type="EC" id="4.1.1.39"/>
    </reaction>
</comment>
<comment type="catalytic activity">
    <reaction evidence="1">
        <text>D-ribulose 1,5-bisphosphate + O2 = 2-phosphoglycolate + (2R)-3-phosphoglycerate + 2 H(+)</text>
        <dbReference type="Rhea" id="RHEA:36631"/>
        <dbReference type="ChEBI" id="CHEBI:15378"/>
        <dbReference type="ChEBI" id="CHEBI:15379"/>
        <dbReference type="ChEBI" id="CHEBI:57870"/>
        <dbReference type="ChEBI" id="CHEBI:58033"/>
        <dbReference type="ChEBI" id="CHEBI:58272"/>
    </reaction>
</comment>
<comment type="cofactor">
    <cofactor evidence="1">
        <name>Mg(2+)</name>
        <dbReference type="ChEBI" id="CHEBI:18420"/>
    </cofactor>
    <text evidence="1">Binds 1 Mg(2+) ion per subunit.</text>
</comment>
<comment type="subunit">
    <text evidence="1">Heterohexadecamer of 8 large chains and 8 small chains; disulfide-linked. The disulfide link is formed within the large subunit homodimers.</text>
</comment>
<comment type="subcellular location">
    <subcellularLocation>
        <location>Plastid</location>
        <location>Chloroplast</location>
    </subcellularLocation>
</comment>
<comment type="PTM">
    <text evidence="1">The disulfide bond which can form in the large chain dimeric partners within the hexadecamer appears to be associated with oxidative stress and protein turnover.</text>
</comment>
<comment type="miscellaneous">
    <text evidence="1">The basic functional RuBisCO is composed of a large chain homodimer in a 'head-to-tail' conformation. In form I RuBisCO this homodimer is arranged in a barrel-like tetramer with the small subunits forming a tetrameric 'cap' on each end of the 'barrel'.</text>
</comment>
<comment type="similarity">
    <text evidence="1">Belongs to the RuBisCO large chain family. Type I subfamily.</text>
</comment>
<proteinExistence type="inferred from homology"/>
<evidence type="ECO:0000255" key="1">
    <source>
        <dbReference type="HAMAP-Rule" id="MF_01338"/>
    </source>
</evidence>
<gene>
    <name evidence="1" type="primary">rbcL</name>
</gene>
<sequence length="466" mass="51696">FVGFKAGVKDYKLTYYTPDYETKDTDILAAFRVTPQPGVPPEEAGAAVAAESSTGTWTTVWTDGLTSLDRYKGRCYGIEPVAGEENQFIAYVAYPLDLFEEGSVTNMFTSIVGNVFGFKALRALRLEDLRIPPAYSKTFQGPPHGIQVERDKLNKYGRPLLGCTIKPKLGLSAKNYGRAVYECLRGGLDFTKDDENVNSQPFMRWRDRFLFCAEAIYKSQAETGEIKGHYLNATAGTCEEMIKRAVFARELGVPIVMHDYLTGGFTANTSLAHYCRDNGLLLHIHRAMHAVIDRQKNHGMHFRVLAKALRMSGGDHIHAGTVVGKLEGEREITLGFVDLLRDDFIEKDRSRGIYFTQDWVSMPGVLPVASGGIHVWHMPALTEIFGDDSVLQFGGGTLGHPWGNAPGAVANRVALEACVQARNEGRDLAREGNEIIREAAKWSPELAAACEVWKEIKFEFEAMDTL</sequence>
<name>RBL_SAUCE</name>